<feature type="chain" id="PRO_0000174607" description="S-adenosylmethionine synthase">
    <location>
        <begin position="1"/>
        <end position="411"/>
    </location>
</feature>
<feature type="region of interest" description="Flexible loop" evidence="1">
    <location>
        <begin position="99"/>
        <end position="109"/>
    </location>
</feature>
<feature type="binding site" description="in other chain" evidence="1">
    <location>
        <position position="15"/>
    </location>
    <ligand>
        <name>ATP</name>
        <dbReference type="ChEBI" id="CHEBI:30616"/>
        <note>ligand shared between two neighboring subunits</note>
    </ligand>
</feature>
<feature type="binding site" evidence="1">
    <location>
        <position position="17"/>
    </location>
    <ligand>
        <name>Mg(2+)</name>
        <dbReference type="ChEBI" id="CHEBI:18420"/>
    </ligand>
</feature>
<feature type="binding site" evidence="1">
    <location>
        <position position="43"/>
    </location>
    <ligand>
        <name>K(+)</name>
        <dbReference type="ChEBI" id="CHEBI:29103"/>
    </ligand>
</feature>
<feature type="binding site" description="in other chain" evidence="1">
    <location>
        <position position="56"/>
    </location>
    <ligand>
        <name>L-methionine</name>
        <dbReference type="ChEBI" id="CHEBI:57844"/>
        <note>ligand shared between two neighboring subunits</note>
    </ligand>
</feature>
<feature type="binding site" description="in other chain" evidence="1">
    <location>
        <position position="99"/>
    </location>
    <ligand>
        <name>L-methionine</name>
        <dbReference type="ChEBI" id="CHEBI:57844"/>
        <note>ligand shared between two neighboring subunits</note>
    </ligand>
</feature>
<feature type="binding site" description="in other chain" evidence="1">
    <location>
        <begin position="174"/>
        <end position="176"/>
    </location>
    <ligand>
        <name>ATP</name>
        <dbReference type="ChEBI" id="CHEBI:30616"/>
        <note>ligand shared between two neighboring subunits</note>
    </ligand>
</feature>
<feature type="binding site" description="in other chain" evidence="1">
    <location>
        <begin position="247"/>
        <end position="248"/>
    </location>
    <ligand>
        <name>ATP</name>
        <dbReference type="ChEBI" id="CHEBI:30616"/>
        <note>ligand shared between two neighboring subunits</note>
    </ligand>
</feature>
<feature type="binding site" evidence="1">
    <location>
        <position position="256"/>
    </location>
    <ligand>
        <name>ATP</name>
        <dbReference type="ChEBI" id="CHEBI:30616"/>
        <note>ligand shared between two neighboring subunits</note>
    </ligand>
</feature>
<feature type="binding site" evidence="1">
    <location>
        <position position="256"/>
    </location>
    <ligand>
        <name>L-methionine</name>
        <dbReference type="ChEBI" id="CHEBI:57844"/>
        <note>ligand shared between two neighboring subunits</note>
    </ligand>
</feature>
<feature type="binding site" description="in other chain" evidence="1">
    <location>
        <begin position="262"/>
        <end position="263"/>
    </location>
    <ligand>
        <name>ATP</name>
        <dbReference type="ChEBI" id="CHEBI:30616"/>
        <note>ligand shared between two neighboring subunits</note>
    </ligand>
</feature>
<feature type="binding site" evidence="1">
    <location>
        <position position="279"/>
    </location>
    <ligand>
        <name>ATP</name>
        <dbReference type="ChEBI" id="CHEBI:30616"/>
        <note>ligand shared between two neighboring subunits</note>
    </ligand>
</feature>
<feature type="binding site" evidence="1">
    <location>
        <position position="283"/>
    </location>
    <ligand>
        <name>ATP</name>
        <dbReference type="ChEBI" id="CHEBI:30616"/>
        <note>ligand shared between two neighboring subunits</note>
    </ligand>
</feature>
<feature type="binding site" description="in other chain" evidence="1">
    <location>
        <position position="287"/>
    </location>
    <ligand>
        <name>L-methionine</name>
        <dbReference type="ChEBI" id="CHEBI:57844"/>
        <note>ligand shared between two neighboring subunits</note>
    </ligand>
</feature>
<accession>Q9X4Q2</accession>
<name>METK_STRST</name>
<protein>
    <recommendedName>
        <fullName evidence="1">S-adenosylmethionine synthase</fullName>
        <shortName evidence="1">AdoMet synthase</shortName>
        <ecNumber evidence="1">2.5.1.6</ecNumber>
    </recommendedName>
    <alternativeName>
        <fullName evidence="1">MAT</fullName>
    </alternativeName>
    <alternativeName>
        <fullName evidence="1">Methionine adenosyltransferase</fullName>
    </alternativeName>
</protein>
<evidence type="ECO:0000255" key="1">
    <source>
        <dbReference type="HAMAP-Rule" id="MF_00086"/>
    </source>
</evidence>
<reference key="1">
    <citation type="submission" date="1998-12" db="EMBL/GenBank/DDBJ databases">
        <title>Cloning of the gene for S-adenosyl-methionine synthetase from Streptomyces spectabilis.</title>
        <authorList>
            <person name="Hyun C.G."/>
            <person name="Suh J.W."/>
        </authorList>
    </citation>
    <scope>NUCLEOTIDE SEQUENCE [GENOMIC DNA]</scope>
    <source>
        <strain>ATCC 27741 / NRRL 2792</strain>
    </source>
</reference>
<dbReference type="EC" id="2.5.1.6" evidence="1"/>
<dbReference type="EMBL" id="AF117274">
    <property type="protein sequence ID" value="AAD22464.1"/>
    <property type="molecule type" value="Genomic_DNA"/>
</dbReference>
<dbReference type="SMR" id="Q9X4Q2"/>
<dbReference type="BRENDA" id="2.5.1.6">
    <property type="organism ID" value="6098"/>
</dbReference>
<dbReference type="UniPathway" id="UPA00315">
    <property type="reaction ID" value="UER00080"/>
</dbReference>
<dbReference type="GO" id="GO:0005737">
    <property type="term" value="C:cytoplasm"/>
    <property type="evidence" value="ECO:0007669"/>
    <property type="project" value="UniProtKB-SubCell"/>
</dbReference>
<dbReference type="GO" id="GO:0005524">
    <property type="term" value="F:ATP binding"/>
    <property type="evidence" value="ECO:0007669"/>
    <property type="project" value="UniProtKB-UniRule"/>
</dbReference>
<dbReference type="GO" id="GO:0000287">
    <property type="term" value="F:magnesium ion binding"/>
    <property type="evidence" value="ECO:0007669"/>
    <property type="project" value="UniProtKB-UniRule"/>
</dbReference>
<dbReference type="GO" id="GO:0004478">
    <property type="term" value="F:methionine adenosyltransferase activity"/>
    <property type="evidence" value="ECO:0007669"/>
    <property type="project" value="UniProtKB-UniRule"/>
</dbReference>
<dbReference type="GO" id="GO:0006730">
    <property type="term" value="P:one-carbon metabolic process"/>
    <property type="evidence" value="ECO:0007669"/>
    <property type="project" value="UniProtKB-KW"/>
</dbReference>
<dbReference type="GO" id="GO:0006556">
    <property type="term" value="P:S-adenosylmethionine biosynthetic process"/>
    <property type="evidence" value="ECO:0007669"/>
    <property type="project" value="UniProtKB-UniRule"/>
</dbReference>
<dbReference type="CDD" id="cd18079">
    <property type="entry name" value="S-AdoMet_synt"/>
    <property type="match status" value="1"/>
</dbReference>
<dbReference type="FunFam" id="3.30.300.10:FF:000006">
    <property type="entry name" value="S-adenosylmethionine synthase"/>
    <property type="match status" value="1"/>
</dbReference>
<dbReference type="Gene3D" id="3.30.300.10">
    <property type="match status" value="3"/>
</dbReference>
<dbReference type="HAMAP" id="MF_00086">
    <property type="entry name" value="S_AdoMet_synth1"/>
    <property type="match status" value="1"/>
</dbReference>
<dbReference type="InterPro" id="IPR022631">
    <property type="entry name" value="ADOMET_SYNTHASE_CS"/>
</dbReference>
<dbReference type="InterPro" id="IPR022630">
    <property type="entry name" value="S-AdoMet_synt_C"/>
</dbReference>
<dbReference type="InterPro" id="IPR022629">
    <property type="entry name" value="S-AdoMet_synt_central"/>
</dbReference>
<dbReference type="InterPro" id="IPR022628">
    <property type="entry name" value="S-AdoMet_synt_N"/>
</dbReference>
<dbReference type="InterPro" id="IPR002133">
    <property type="entry name" value="S-AdoMet_synthetase"/>
</dbReference>
<dbReference type="InterPro" id="IPR022636">
    <property type="entry name" value="S-AdoMet_synthetase_sfam"/>
</dbReference>
<dbReference type="NCBIfam" id="TIGR01034">
    <property type="entry name" value="metK"/>
    <property type="match status" value="1"/>
</dbReference>
<dbReference type="PANTHER" id="PTHR11964">
    <property type="entry name" value="S-ADENOSYLMETHIONINE SYNTHETASE"/>
    <property type="match status" value="1"/>
</dbReference>
<dbReference type="Pfam" id="PF02773">
    <property type="entry name" value="S-AdoMet_synt_C"/>
    <property type="match status" value="1"/>
</dbReference>
<dbReference type="Pfam" id="PF02772">
    <property type="entry name" value="S-AdoMet_synt_M"/>
    <property type="match status" value="1"/>
</dbReference>
<dbReference type="Pfam" id="PF00438">
    <property type="entry name" value="S-AdoMet_synt_N"/>
    <property type="match status" value="1"/>
</dbReference>
<dbReference type="PIRSF" id="PIRSF000497">
    <property type="entry name" value="MAT"/>
    <property type="match status" value="1"/>
</dbReference>
<dbReference type="SUPFAM" id="SSF55973">
    <property type="entry name" value="S-adenosylmethionine synthetase"/>
    <property type="match status" value="3"/>
</dbReference>
<dbReference type="PROSITE" id="PS00376">
    <property type="entry name" value="ADOMET_SYNTHASE_1"/>
    <property type="match status" value="1"/>
</dbReference>
<dbReference type="PROSITE" id="PS00377">
    <property type="entry name" value="ADOMET_SYNTHASE_2"/>
    <property type="match status" value="1"/>
</dbReference>
<sequence length="411" mass="44658">MSRRLFTSESVTEGHPDKIADQISDTILDALLREDPTSRVAVETLITTGLVHVAGEVTTKAYAPIAQLVREKILEIGYDSSKKGFDGASCGVSVSIGAQSPDIAQGVDTAYESRVEGDEDELDRQGAGDQGLMFGYACDETPELMPLPIHLAHRLSRRLSEVRKNGTIPYLRPDGKTQVTIEYDGDKAVRLDTVVVSSQHASDIDLESLLAPDIREFVVEPELKALVEDGIKLETEGYRLLVNPTGRFEIGGPMGDAGLTGRKIIIDTYGGMSRHGGGAFSGKDPSKVDRSAAYAMRWVAKNVVAAGLASRCEVQVAYAIGKAEPVGLFVETFGTNTIDTDKIEQAISEVFDLRPAAIIRDLDLLRPIYSQTAAYGHFGRSLPEFTWEKTDRVDGCGRPPVWRADLLPLVH</sequence>
<keyword id="KW-0067">ATP-binding</keyword>
<keyword id="KW-0963">Cytoplasm</keyword>
<keyword id="KW-0460">Magnesium</keyword>
<keyword id="KW-0479">Metal-binding</keyword>
<keyword id="KW-0547">Nucleotide-binding</keyword>
<keyword id="KW-0554">One-carbon metabolism</keyword>
<keyword id="KW-0630">Potassium</keyword>
<keyword id="KW-0808">Transferase</keyword>
<proteinExistence type="inferred from homology"/>
<organism>
    <name type="scientific">Streptomyces spectabilis</name>
    <dbReference type="NCBI Taxonomy" id="68270"/>
    <lineage>
        <taxon>Bacteria</taxon>
        <taxon>Bacillati</taxon>
        <taxon>Actinomycetota</taxon>
        <taxon>Actinomycetes</taxon>
        <taxon>Kitasatosporales</taxon>
        <taxon>Streptomycetaceae</taxon>
        <taxon>Streptomyces</taxon>
    </lineage>
</organism>
<comment type="function">
    <text evidence="1">Catalyzes the formation of S-adenosylmethionine (AdoMet) from methionine and ATP. The overall synthetic reaction is composed of two sequential steps, AdoMet formation and the subsequent tripolyphosphate hydrolysis which occurs prior to release of AdoMet from the enzyme.</text>
</comment>
<comment type="catalytic activity">
    <reaction evidence="1">
        <text>L-methionine + ATP + H2O = S-adenosyl-L-methionine + phosphate + diphosphate</text>
        <dbReference type="Rhea" id="RHEA:21080"/>
        <dbReference type="ChEBI" id="CHEBI:15377"/>
        <dbReference type="ChEBI" id="CHEBI:30616"/>
        <dbReference type="ChEBI" id="CHEBI:33019"/>
        <dbReference type="ChEBI" id="CHEBI:43474"/>
        <dbReference type="ChEBI" id="CHEBI:57844"/>
        <dbReference type="ChEBI" id="CHEBI:59789"/>
        <dbReference type="EC" id="2.5.1.6"/>
    </reaction>
</comment>
<comment type="cofactor">
    <cofactor evidence="1">
        <name>Mg(2+)</name>
        <dbReference type="ChEBI" id="CHEBI:18420"/>
    </cofactor>
    <text evidence="1">Binds 2 divalent ions per subunit.</text>
</comment>
<comment type="cofactor">
    <cofactor evidence="1">
        <name>K(+)</name>
        <dbReference type="ChEBI" id="CHEBI:29103"/>
    </cofactor>
    <text evidence="1">Binds 1 potassium ion per subunit.</text>
</comment>
<comment type="pathway">
    <text evidence="1">Amino-acid biosynthesis; S-adenosyl-L-methionine biosynthesis; S-adenosyl-L-methionine from L-methionine: step 1/1.</text>
</comment>
<comment type="subunit">
    <text evidence="1">Homotetramer; dimer of dimers.</text>
</comment>
<comment type="subcellular location">
    <subcellularLocation>
        <location evidence="1">Cytoplasm</location>
    </subcellularLocation>
</comment>
<comment type="similarity">
    <text evidence="1">Belongs to the AdoMet synthase family.</text>
</comment>
<gene>
    <name evidence="1" type="primary">metK</name>
</gene>